<sequence length="217" mass="22906">MPLHRLHGLYAITDPALTPDEHLLPAAEAALRGGAKLLQYRDKTASPTQREYRAAQLRQLCHQYHALFIVNDDPALAAQVNADGVHIGQSDGGIKAARDQLGGSRIIGVTCHGDLTLAARAAEAGADYLAMGRFFTSHTKPLAPPASLALLRQACQQFHQPVVAIGGVNPDNAPQLINAGAVSVAVIHALFGQTDTDAIEAAARQLSACFQTNRSAP</sequence>
<organism>
    <name type="scientific">Alcanivorax borkumensis (strain ATCC 700651 / DSM 11573 / NCIMB 13689 / SK2)</name>
    <dbReference type="NCBI Taxonomy" id="393595"/>
    <lineage>
        <taxon>Bacteria</taxon>
        <taxon>Pseudomonadati</taxon>
        <taxon>Pseudomonadota</taxon>
        <taxon>Gammaproteobacteria</taxon>
        <taxon>Oceanospirillales</taxon>
        <taxon>Alcanivoracaceae</taxon>
        <taxon>Alcanivorax</taxon>
    </lineage>
</organism>
<comment type="function">
    <text evidence="1">Condenses 4-methyl-5-(beta-hydroxyethyl)thiazole monophosphate (THZ-P) and 2-methyl-4-amino-5-hydroxymethyl pyrimidine pyrophosphate (HMP-PP) to form thiamine monophosphate (TMP).</text>
</comment>
<comment type="catalytic activity">
    <reaction evidence="1">
        <text>2-[(2R,5Z)-2-carboxy-4-methylthiazol-5(2H)-ylidene]ethyl phosphate + 4-amino-2-methyl-5-(diphosphooxymethyl)pyrimidine + 2 H(+) = thiamine phosphate + CO2 + diphosphate</text>
        <dbReference type="Rhea" id="RHEA:47844"/>
        <dbReference type="ChEBI" id="CHEBI:15378"/>
        <dbReference type="ChEBI" id="CHEBI:16526"/>
        <dbReference type="ChEBI" id="CHEBI:33019"/>
        <dbReference type="ChEBI" id="CHEBI:37575"/>
        <dbReference type="ChEBI" id="CHEBI:57841"/>
        <dbReference type="ChEBI" id="CHEBI:62899"/>
        <dbReference type="EC" id="2.5.1.3"/>
    </reaction>
</comment>
<comment type="catalytic activity">
    <reaction evidence="1">
        <text>2-(2-carboxy-4-methylthiazol-5-yl)ethyl phosphate + 4-amino-2-methyl-5-(diphosphooxymethyl)pyrimidine + 2 H(+) = thiamine phosphate + CO2 + diphosphate</text>
        <dbReference type="Rhea" id="RHEA:47848"/>
        <dbReference type="ChEBI" id="CHEBI:15378"/>
        <dbReference type="ChEBI" id="CHEBI:16526"/>
        <dbReference type="ChEBI" id="CHEBI:33019"/>
        <dbReference type="ChEBI" id="CHEBI:37575"/>
        <dbReference type="ChEBI" id="CHEBI:57841"/>
        <dbReference type="ChEBI" id="CHEBI:62890"/>
        <dbReference type="EC" id="2.5.1.3"/>
    </reaction>
</comment>
<comment type="catalytic activity">
    <reaction evidence="1">
        <text>4-methyl-5-(2-phosphooxyethyl)-thiazole + 4-amino-2-methyl-5-(diphosphooxymethyl)pyrimidine + H(+) = thiamine phosphate + diphosphate</text>
        <dbReference type="Rhea" id="RHEA:22328"/>
        <dbReference type="ChEBI" id="CHEBI:15378"/>
        <dbReference type="ChEBI" id="CHEBI:33019"/>
        <dbReference type="ChEBI" id="CHEBI:37575"/>
        <dbReference type="ChEBI" id="CHEBI:57841"/>
        <dbReference type="ChEBI" id="CHEBI:58296"/>
        <dbReference type="EC" id="2.5.1.3"/>
    </reaction>
</comment>
<comment type="cofactor">
    <cofactor evidence="1">
        <name>Mg(2+)</name>
        <dbReference type="ChEBI" id="CHEBI:18420"/>
    </cofactor>
    <text evidence="1">Binds 1 Mg(2+) ion per subunit.</text>
</comment>
<comment type="pathway">
    <text evidence="1">Cofactor biosynthesis; thiamine diphosphate biosynthesis; thiamine phosphate from 4-amino-2-methyl-5-diphosphomethylpyrimidine and 4-methyl-5-(2-phosphoethyl)-thiazole: step 1/1.</text>
</comment>
<comment type="similarity">
    <text evidence="1">Belongs to the thiamine-phosphate synthase family.</text>
</comment>
<comment type="sequence caution" evidence="2">
    <conflict type="erroneous initiation">
        <sequence resource="EMBL-CDS" id="CAL15803"/>
    </conflict>
</comment>
<dbReference type="EC" id="2.5.1.3" evidence="1"/>
<dbReference type="EMBL" id="AM286690">
    <property type="protein sequence ID" value="CAL15803.1"/>
    <property type="status" value="ALT_INIT"/>
    <property type="molecule type" value="Genomic_DNA"/>
</dbReference>
<dbReference type="RefSeq" id="WP_041704752.1">
    <property type="nucleotide sequence ID" value="NC_008260.1"/>
</dbReference>
<dbReference type="SMR" id="Q0VSP5"/>
<dbReference type="STRING" id="393595.ABO_0355"/>
<dbReference type="KEGG" id="abo:ABO_0355"/>
<dbReference type="eggNOG" id="COG0352">
    <property type="taxonomic scope" value="Bacteria"/>
</dbReference>
<dbReference type="HOGENOM" id="CLU_018272_3_1_6"/>
<dbReference type="OrthoDB" id="9789949at2"/>
<dbReference type="UniPathway" id="UPA00060">
    <property type="reaction ID" value="UER00141"/>
</dbReference>
<dbReference type="Proteomes" id="UP000008871">
    <property type="component" value="Chromosome"/>
</dbReference>
<dbReference type="GO" id="GO:0005737">
    <property type="term" value="C:cytoplasm"/>
    <property type="evidence" value="ECO:0007669"/>
    <property type="project" value="TreeGrafter"/>
</dbReference>
<dbReference type="GO" id="GO:0000287">
    <property type="term" value="F:magnesium ion binding"/>
    <property type="evidence" value="ECO:0007669"/>
    <property type="project" value="UniProtKB-UniRule"/>
</dbReference>
<dbReference type="GO" id="GO:0004789">
    <property type="term" value="F:thiamine-phosphate diphosphorylase activity"/>
    <property type="evidence" value="ECO:0007669"/>
    <property type="project" value="UniProtKB-UniRule"/>
</dbReference>
<dbReference type="GO" id="GO:0009228">
    <property type="term" value="P:thiamine biosynthetic process"/>
    <property type="evidence" value="ECO:0007669"/>
    <property type="project" value="UniProtKB-KW"/>
</dbReference>
<dbReference type="GO" id="GO:0009229">
    <property type="term" value="P:thiamine diphosphate biosynthetic process"/>
    <property type="evidence" value="ECO:0007669"/>
    <property type="project" value="UniProtKB-UniRule"/>
</dbReference>
<dbReference type="CDD" id="cd00564">
    <property type="entry name" value="TMP_TenI"/>
    <property type="match status" value="1"/>
</dbReference>
<dbReference type="Gene3D" id="3.20.20.70">
    <property type="entry name" value="Aldolase class I"/>
    <property type="match status" value="1"/>
</dbReference>
<dbReference type="HAMAP" id="MF_00097">
    <property type="entry name" value="TMP_synthase"/>
    <property type="match status" value="1"/>
</dbReference>
<dbReference type="InterPro" id="IPR013785">
    <property type="entry name" value="Aldolase_TIM"/>
</dbReference>
<dbReference type="InterPro" id="IPR036206">
    <property type="entry name" value="ThiamineP_synth_sf"/>
</dbReference>
<dbReference type="InterPro" id="IPR022998">
    <property type="entry name" value="ThiamineP_synth_TenI"/>
</dbReference>
<dbReference type="InterPro" id="IPR034291">
    <property type="entry name" value="TMP_synthase"/>
</dbReference>
<dbReference type="NCBIfam" id="TIGR00693">
    <property type="entry name" value="thiE"/>
    <property type="match status" value="1"/>
</dbReference>
<dbReference type="PANTHER" id="PTHR20857">
    <property type="entry name" value="THIAMINE-PHOSPHATE PYROPHOSPHORYLASE"/>
    <property type="match status" value="1"/>
</dbReference>
<dbReference type="PANTHER" id="PTHR20857:SF15">
    <property type="entry name" value="THIAMINE-PHOSPHATE SYNTHASE"/>
    <property type="match status" value="1"/>
</dbReference>
<dbReference type="Pfam" id="PF02581">
    <property type="entry name" value="TMP-TENI"/>
    <property type="match status" value="1"/>
</dbReference>
<dbReference type="SUPFAM" id="SSF51391">
    <property type="entry name" value="Thiamin phosphate synthase"/>
    <property type="match status" value="1"/>
</dbReference>
<proteinExistence type="inferred from homology"/>
<feature type="chain" id="PRO_0000336369" description="Thiamine-phosphate synthase">
    <location>
        <begin position="1"/>
        <end position="217"/>
    </location>
</feature>
<feature type="binding site" evidence="1">
    <location>
        <begin position="39"/>
        <end position="43"/>
    </location>
    <ligand>
        <name>4-amino-2-methyl-5-(diphosphooxymethyl)pyrimidine</name>
        <dbReference type="ChEBI" id="CHEBI:57841"/>
    </ligand>
</feature>
<feature type="binding site" evidence="1">
    <location>
        <position position="71"/>
    </location>
    <ligand>
        <name>4-amino-2-methyl-5-(diphosphooxymethyl)pyrimidine</name>
        <dbReference type="ChEBI" id="CHEBI:57841"/>
    </ligand>
</feature>
<feature type="binding site" evidence="1">
    <location>
        <position position="72"/>
    </location>
    <ligand>
        <name>Mg(2+)</name>
        <dbReference type="ChEBI" id="CHEBI:18420"/>
    </ligand>
</feature>
<feature type="binding site" evidence="1">
    <location>
        <position position="91"/>
    </location>
    <ligand>
        <name>Mg(2+)</name>
        <dbReference type="ChEBI" id="CHEBI:18420"/>
    </ligand>
</feature>
<feature type="binding site" evidence="1">
    <location>
        <position position="110"/>
    </location>
    <ligand>
        <name>4-amino-2-methyl-5-(diphosphooxymethyl)pyrimidine</name>
        <dbReference type="ChEBI" id="CHEBI:57841"/>
    </ligand>
</feature>
<feature type="binding site" evidence="1">
    <location>
        <begin position="137"/>
        <end position="139"/>
    </location>
    <ligand>
        <name>2-[(2R,5Z)-2-carboxy-4-methylthiazol-5(2H)-ylidene]ethyl phosphate</name>
        <dbReference type="ChEBI" id="CHEBI:62899"/>
    </ligand>
</feature>
<feature type="binding site" evidence="1">
    <location>
        <position position="140"/>
    </location>
    <ligand>
        <name>4-amino-2-methyl-5-(diphosphooxymethyl)pyrimidine</name>
        <dbReference type="ChEBI" id="CHEBI:57841"/>
    </ligand>
</feature>
<feature type="binding site" evidence="1">
    <location>
        <position position="167"/>
    </location>
    <ligand>
        <name>2-[(2R,5Z)-2-carboxy-4-methylthiazol-5(2H)-ylidene]ethyl phosphate</name>
        <dbReference type="ChEBI" id="CHEBI:62899"/>
    </ligand>
</feature>
<protein>
    <recommendedName>
        <fullName evidence="1">Thiamine-phosphate synthase</fullName>
        <shortName evidence="1">TP synthase</shortName>
        <shortName evidence="1">TPS</shortName>
        <ecNumber evidence="1">2.5.1.3</ecNumber>
    </recommendedName>
    <alternativeName>
        <fullName evidence="1">Thiamine-phosphate pyrophosphorylase</fullName>
        <shortName evidence="1">TMP pyrophosphorylase</shortName>
        <shortName evidence="1">TMP-PPase</shortName>
    </alternativeName>
</protein>
<accession>Q0VSP5</accession>
<reference key="1">
    <citation type="journal article" date="2006" name="Nat. Biotechnol.">
        <title>Genome sequence of the ubiquitous hydrocarbon-degrading marine bacterium Alcanivorax borkumensis.</title>
        <authorList>
            <person name="Schneiker S."/>
            <person name="Martins dos Santos V.A.P."/>
            <person name="Bartels D."/>
            <person name="Bekel T."/>
            <person name="Brecht M."/>
            <person name="Buhrmester J."/>
            <person name="Chernikova T.N."/>
            <person name="Denaro R."/>
            <person name="Ferrer M."/>
            <person name="Gertler C."/>
            <person name="Goesmann A."/>
            <person name="Golyshina O.V."/>
            <person name="Kaminski F."/>
            <person name="Khachane A.N."/>
            <person name="Lang S."/>
            <person name="Linke B."/>
            <person name="McHardy A.C."/>
            <person name="Meyer F."/>
            <person name="Nechitaylo T."/>
            <person name="Puehler A."/>
            <person name="Regenhardt D."/>
            <person name="Rupp O."/>
            <person name="Sabirova J.S."/>
            <person name="Selbitschka W."/>
            <person name="Yakimov M.M."/>
            <person name="Timmis K.N."/>
            <person name="Vorhoelter F.-J."/>
            <person name="Weidner S."/>
            <person name="Kaiser O."/>
            <person name="Golyshin P.N."/>
        </authorList>
    </citation>
    <scope>NUCLEOTIDE SEQUENCE [LARGE SCALE GENOMIC DNA]</scope>
    <source>
        <strain>ATCC 700651 / DSM 11573 / NCIMB 13689 / SK2</strain>
    </source>
</reference>
<name>THIE_ALCBS</name>
<evidence type="ECO:0000255" key="1">
    <source>
        <dbReference type="HAMAP-Rule" id="MF_00097"/>
    </source>
</evidence>
<evidence type="ECO:0000305" key="2"/>
<keyword id="KW-0460">Magnesium</keyword>
<keyword id="KW-0479">Metal-binding</keyword>
<keyword id="KW-1185">Reference proteome</keyword>
<keyword id="KW-0784">Thiamine biosynthesis</keyword>
<keyword id="KW-0808">Transferase</keyword>
<gene>
    <name evidence="1" type="primary">thiE</name>
    <name type="ordered locus">ABO_0355</name>
</gene>